<accession>B9KG80</accession>
<reference key="1">
    <citation type="journal article" date="2008" name="Foodborne Pathog. Dis.">
        <title>The complete genome sequence and analysis of the human pathogen Campylobacter lari.</title>
        <authorList>
            <person name="Miller W.G."/>
            <person name="Wang G."/>
            <person name="Binnewies T.T."/>
            <person name="Parker C.T."/>
        </authorList>
    </citation>
    <scope>NUCLEOTIDE SEQUENCE [LARGE SCALE GENOMIC DNA]</scope>
    <source>
        <strain>RM2100 / D67 / ATCC BAA-1060</strain>
    </source>
</reference>
<name>MURA_CAMLR</name>
<sequence length="418" mass="45230">MTYLEIDGVEKLSGEVIISGAKNAALPLIASSILAKNEAQISNLPNVADICTLLSLLKNLGASYTFENNFAKINTKDLNKTIAKYDIVRKMRASILTLGPLLARFGNCEVSLPGGCAIGQRPIDLHLLALEKMGANIEIKQGYVVASGKLKGADLMFDKITVTGSENIIMAAALAHGKTRLLNVAKEPEVVQLCEVLAEAGLDIKGVGSDELEIYGTSGELLEFKPFKIIPDRIEAGTYLCAGAITNSKITLKNVNANHLGAVLAKLEQMGFSFDISEDSISINPAKEIKPVEILTSEYPGFPTDMQAQFMALALRANGVSIIDERLFENRFMHVSELLRMGADIRLNGHIATINGTKELFGADVMATDLRASSALILAALAAKGTSKIHRIYHLDRGYENLEEKFKNLGASIRRLEE</sequence>
<gene>
    <name evidence="1" type="primary">murA</name>
    <name type="ordered locus">Cla_0736</name>
</gene>
<protein>
    <recommendedName>
        <fullName evidence="1">UDP-N-acetylglucosamine 1-carboxyvinyltransferase</fullName>
        <ecNumber evidence="1">2.5.1.7</ecNumber>
    </recommendedName>
    <alternativeName>
        <fullName evidence="1">Enoylpyruvate transferase</fullName>
    </alternativeName>
    <alternativeName>
        <fullName evidence="1">UDP-N-acetylglucosamine enolpyruvyl transferase</fullName>
        <shortName evidence="1">EPT</shortName>
    </alternativeName>
</protein>
<proteinExistence type="inferred from homology"/>
<evidence type="ECO:0000255" key="1">
    <source>
        <dbReference type="HAMAP-Rule" id="MF_00111"/>
    </source>
</evidence>
<dbReference type="EC" id="2.5.1.7" evidence="1"/>
<dbReference type="EMBL" id="CP000932">
    <property type="protein sequence ID" value="ACM64065.1"/>
    <property type="molecule type" value="Genomic_DNA"/>
</dbReference>
<dbReference type="RefSeq" id="WP_012661448.1">
    <property type="nucleotide sequence ID" value="NC_012039.1"/>
</dbReference>
<dbReference type="SMR" id="B9KG80"/>
<dbReference type="STRING" id="306263.Cla_0736"/>
<dbReference type="KEGG" id="cla:CLA_0736"/>
<dbReference type="PATRIC" id="fig|306263.5.peg.717"/>
<dbReference type="eggNOG" id="COG0766">
    <property type="taxonomic scope" value="Bacteria"/>
</dbReference>
<dbReference type="HOGENOM" id="CLU_027387_0_0_7"/>
<dbReference type="UniPathway" id="UPA00219"/>
<dbReference type="Proteomes" id="UP000007727">
    <property type="component" value="Chromosome"/>
</dbReference>
<dbReference type="GO" id="GO:0005737">
    <property type="term" value="C:cytoplasm"/>
    <property type="evidence" value="ECO:0007669"/>
    <property type="project" value="UniProtKB-SubCell"/>
</dbReference>
<dbReference type="GO" id="GO:0008760">
    <property type="term" value="F:UDP-N-acetylglucosamine 1-carboxyvinyltransferase activity"/>
    <property type="evidence" value="ECO:0007669"/>
    <property type="project" value="UniProtKB-UniRule"/>
</dbReference>
<dbReference type="GO" id="GO:0051301">
    <property type="term" value="P:cell division"/>
    <property type="evidence" value="ECO:0007669"/>
    <property type="project" value="UniProtKB-KW"/>
</dbReference>
<dbReference type="GO" id="GO:0071555">
    <property type="term" value="P:cell wall organization"/>
    <property type="evidence" value="ECO:0007669"/>
    <property type="project" value="UniProtKB-KW"/>
</dbReference>
<dbReference type="GO" id="GO:0009252">
    <property type="term" value="P:peptidoglycan biosynthetic process"/>
    <property type="evidence" value="ECO:0007669"/>
    <property type="project" value="UniProtKB-UniRule"/>
</dbReference>
<dbReference type="GO" id="GO:0008360">
    <property type="term" value="P:regulation of cell shape"/>
    <property type="evidence" value="ECO:0007669"/>
    <property type="project" value="UniProtKB-KW"/>
</dbReference>
<dbReference type="GO" id="GO:0019277">
    <property type="term" value="P:UDP-N-acetylgalactosamine biosynthetic process"/>
    <property type="evidence" value="ECO:0007669"/>
    <property type="project" value="InterPro"/>
</dbReference>
<dbReference type="CDD" id="cd01555">
    <property type="entry name" value="UdpNAET"/>
    <property type="match status" value="1"/>
</dbReference>
<dbReference type="FunFam" id="3.65.10.10:FF:000001">
    <property type="entry name" value="UDP-N-acetylglucosamine 1-carboxyvinyltransferase"/>
    <property type="match status" value="1"/>
</dbReference>
<dbReference type="Gene3D" id="3.65.10.10">
    <property type="entry name" value="Enolpyruvate transferase domain"/>
    <property type="match status" value="2"/>
</dbReference>
<dbReference type="HAMAP" id="MF_00111">
    <property type="entry name" value="MurA"/>
    <property type="match status" value="1"/>
</dbReference>
<dbReference type="InterPro" id="IPR001986">
    <property type="entry name" value="Enolpyruvate_Tfrase_dom"/>
</dbReference>
<dbReference type="InterPro" id="IPR036968">
    <property type="entry name" value="Enolpyruvate_Tfrase_sf"/>
</dbReference>
<dbReference type="InterPro" id="IPR050068">
    <property type="entry name" value="MurA_subfamily"/>
</dbReference>
<dbReference type="InterPro" id="IPR013792">
    <property type="entry name" value="RNA3'P_cycl/enolpyr_Trfase_a/b"/>
</dbReference>
<dbReference type="InterPro" id="IPR005750">
    <property type="entry name" value="UDP_GlcNAc_COvinyl_MurA"/>
</dbReference>
<dbReference type="NCBIfam" id="TIGR01072">
    <property type="entry name" value="murA"/>
    <property type="match status" value="1"/>
</dbReference>
<dbReference type="NCBIfam" id="NF006873">
    <property type="entry name" value="PRK09369.1"/>
    <property type="match status" value="1"/>
</dbReference>
<dbReference type="PANTHER" id="PTHR43783">
    <property type="entry name" value="UDP-N-ACETYLGLUCOSAMINE 1-CARBOXYVINYLTRANSFERASE"/>
    <property type="match status" value="1"/>
</dbReference>
<dbReference type="PANTHER" id="PTHR43783:SF1">
    <property type="entry name" value="UDP-N-ACETYLGLUCOSAMINE 1-CARBOXYVINYLTRANSFERASE"/>
    <property type="match status" value="1"/>
</dbReference>
<dbReference type="Pfam" id="PF00275">
    <property type="entry name" value="EPSP_synthase"/>
    <property type="match status" value="1"/>
</dbReference>
<dbReference type="SUPFAM" id="SSF55205">
    <property type="entry name" value="EPT/RTPC-like"/>
    <property type="match status" value="1"/>
</dbReference>
<feature type="chain" id="PRO_1000192078" description="UDP-N-acetylglucosamine 1-carboxyvinyltransferase">
    <location>
        <begin position="1"/>
        <end position="418"/>
    </location>
</feature>
<feature type="active site" description="Proton donor" evidence="1">
    <location>
        <position position="116"/>
    </location>
</feature>
<feature type="binding site" evidence="1">
    <location>
        <begin position="22"/>
        <end position="23"/>
    </location>
    <ligand>
        <name>phosphoenolpyruvate</name>
        <dbReference type="ChEBI" id="CHEBI:58702"/>
    </ligand>
</feature>
<feature type="binding site" evidence="1">
    <location>
        <position position="92"/>
    </location>
    <ligand>
        <name>UDP-N-acetyl-alpha-D-glucosamine</name>
        <dbReference type="ChEBI" id="CHEBI:57705"/>
    </ligand>
</feature>
<feature type="binding site" evidence="1">
    <location>
        <begin position="121"/>
        <end position="125"/>
    </location>
    <ligand>
        <name>UDP-N-acetyl-alpha-D-glucosamine</name>
        <dbReference type="ChEBI" id="CHEBI:57705"/>
    </ligand>
</feature>
<feature type="binding site" evidence="1">
    <location>
        <position position="305"/>
    </location>
    <ligand>
        <name>UDP-N-acetyl-alpha-D-glucosamine</name>
        <dbReference type="ChEBI" id="CHEBI:57705"/>
    </ligand>
</feature>
<feature type="binding site" evidence="1">
    <location>
        <position position="327"/>
    </location>
    <ligand>
        <name>UDP-N-acetyl-alpha-D-glucosamine</name>
        <dbReference type="ChEBI" id="CHEBI:57705"/>
    </ligand>
</feature>
<feature type="modified residue" description="2-(S-cysteinyl)pyruvic acid O-phosphothioketal" evidence="1">
    <location>
        <position position="116"/>
    </location>
</feature>
<comment type="function">
    <text evidence="1">Cell wall formation. Adds enolpyruvyl to UDP-N-acetylglucosamine.</text>
</comment>
<comment type="catalytic activity">
    <reaction evidence="1">
        <text>phosphoenolpyruvate + UDP-N-acetyl-alpha-D-glucosamine = UDP-N-acetyl-3-O-(1-carboxyvinyl)-alpha-D-glucosamine + phosphate</text>
        <dbReference type="Rhea" id="RHEA:18681"/>
        <dbReference type="ChEBI" id="CHEBI:43474"/>
        <dbReference type="ChEBI" id="CHEBI:57705"/>
        <dbReference type="ChEBI" id="CHEBI:58702"/>
        <dbReference type="ChEBI" id="CHEBI:68483"/>
        <dbReference type="EC" id="2.5.1.7"/>
    </reaction>
</comment>
<comment type="pathway">
    <text evidence="1">Cell wall biogenesis; peptidoglycan biosynthesis.</text>
</comment>
<comment type="subcellular location">
    <subcellularLocation>
        <location evidence="1">Cytoplasm</location>
    </subcellularLocation>
</comment>
<comment type="similarity">
    <text evidence="1">Belongs to the EPSP synthase family. MurA subfamily.</text>
</comment>
<organism>
    <name type="scientific">Campylobacter lari (strain RM2100 / D67 / ATCC BAA-1060)</name>
    <dbReference type="NCBI Taxonomy" id="306263"/>
    <lineage>
        <taxon>Bacteria</taxon>
        <taxon>Pseudomonadati</taxon>
        <taxon>Campylobacterota</taxon>
        <taxon>Epsilonproteobacteria</taxon>
        <taxon>Campylobacterales</taxon>
        <taxon>Campylobacteraceae</taxon>
        <taxon>Campylobacter</taxon>
    </lineage>
</organism>
<keyword id="KW-0131">Cell cycle</keyword>
<keyword id="KW-0132">Cell division</keyword>
<keyword id="KW-0133">Cell shape</keyword>
<keyword id="KW-0961">Cell wall biogenesis/degradation</keyword>
<keyword id="KW-0963">Cytoplasm</keyword>
<keyword id="KW-0573">Peptidoglycan synthesis</keyword>
<keyword id="KW-0670">Pyruvate</keyword>
<keyword id="KW-1185">Reference proteome</keyword>
<keyword id="KW-0808">Transferase</keyword>